<reference key="1">
    <citation type="journal article" date="2006" name="Genome Biol.">
        <title>Genomic analysis reveals that Pseudomonas aeruginosa virulence is combinatorial.</title>
        <authorList>
            <person name="Lee D.G."/>
            <person name="Urbach J.M."/>
            <person name="Wu G."/>
            <person name="Liberati N.T."/>
            <person name="Feinbaum R.L."/>
            <person name="Miyata S."/>
            <person name="Diggins L.T."/>
            <person name="He J."/>
            <person name="Saucier M."/>
            <person name="Deziel E."/>
            <person name="Friedman L."/>
            <person name="Li L."/>
            <person name="Grills G."/>
            <person name="Montgomery K."/>
            <person name="Kucherlapati R."/>
            <person name="Rahme L.G."/>
            <person name="Ausubel F.M."/>
        </authorList>
    </citation>
    <scope>NUCLEOTIDE SEQUENCE [LARGE SCALE GENOMIC DNA]</scope>
    <source>
        <strain>UCBPP-PA14</strain>
    </source>
</reference>
<protein>
    <recommendedName>
        <fullName evidence="1">Chaperonin GroEL</fullName>
        <ecNumber evidence="1">5.6.1.7</ecNumber>
    </recommendedName>
    <alternativeName>
        <fullName evidence="1">60 kDa chaperonin</fullName>
    </alternativeName>
    <alternativeName>
        <fullName evidence="1">Chaperonin-60</fullName>
        <shortName evidence="1">Cpn60</shortName>
    </alternativeName>
</protein>
<evidence type="ECO:0000255" key="1">
    <source>
        <dbReference type="HAMAP-Rule" id="MF_00600"/>
    </source>
</evidence>
<sequence length="547" mass="57086">MAAKEVKFGDSARKKMLVGVNVLADAVKATLGPKGRNVVLDKSFGAPTITKDGVSVAKEIELKDKFENMGAQLVKDVASKANDAAGDGTTTATVLAQAIVNEGLKAVAAGMNPMDLKRGIDKATVAIVAQLKELAKPCADTKAIAQVGTISANSDESIGQIIAEAMEKVGKEGVITVEEGSGLENELSVVEGMQFDRGYLSPYFVNKPDTMAAELDSPLLLLVDKKISNIREMLPVLEAVAKAGRPLLIVAEDVEGEALATLVVNNMRGIVKVAAVKAPGFGDRRKAMLQDIAILTGGTVISEEVGLSLEGATLEHLGNAKRVVINKENTTIIDGAGVQADIEARVLQIRKQIEETTSDYDREKLQERLAKLAGGVAVIKVGAATEVEMKEKKARVEDALHATRAAVEEGVVPGGGVALVRALQAIEGLKGDNEEQNVGIALLRRAVESPLRQIVANAGDEPSVVVDKVKQGSGNYGFNAATGVYGDMIEMGILDPAKVTRSALQAAASIGGLMITTEAMVAEIVEDKPAMGGMPDMGGMGGMGGMM</sequence>
<gene>
    <name evidence="1" type="primary">groEL</name>
    <name evidence="1" type="synonym">groL</name>
    <name type="ordered locus">PA14_57010</name>
</gene>
<keyword id="KW-0067">ATP-binding</keyword>
<keyword id="KW-0143">Chaperone</keyword>
<keyword id="KW-0963">Cytoplasm</keyword>
<keyword id="KW-0413">Isomerase</keyword>
<keyword id="KW-0547">Nucleotide-binding</keyword>
<organism>
    <name type="scientific">Pseudomonas aeruginosa (strain UCBPP-PA14)</name>
    <dbReference type="NCBI Taxonomy" id="208963"/>
    <lineage>
        <taxon>Bacteria</taxon>
        <taxon>Pseudomonadati</taxon>
        <taxon>Pseudomonadota</taxon>
        <taxon>Gammaproteobacteria</taxon>
        <taxon>Pseudomonadales</taxon>
        <taxon>Pseudomonadaceae</taxon>
        <taxon>Pseudomonas</taxon>
    </lineage>
</organism>
<accession>Q02H55</accession>
<feature type="chain" id="PRO_1000025819" description="Chaperonin GroEL">
    <location>
        <begin position="1"/>
        <end position="547"/>
    </location>
</feature>
<feature type="binding site" evidence="1">
    <location>
        <begin position="30"/>
        <end position="33"/>
    </location>
    <ligand>
        <name>ATP</name>
        <dbReference type="ChEBI" id="CHEBI:30616"/>
    </ligand>
</feature>
<feature type="binding site" evidence="1">
    <location>
        <position position="51"/>
    </location>
    <ligand>
        <name>ATP</name>
        <dbReference type="ChEBI" id="CHEBI:30616"/>
    </ligand>
</feature>
<feature type="binding site" evidence="1">
    <location>
        <begin position="87"/>
        <end position="91"/>
    </location>
    <ligand>
        <name>ATP</name>
        <dbReference type="ChEBI" id="CHEBI:30616"/>
    </ligand>
</feature>
<feature type="binding site" evidence="1">
    <location>
        <position position="415"/>
    </location>
    <ligand>
        <name>ATP</name>
        <dbReference type="ChEBI" id="CHEBI:30616"/>
    </ligand>
</feature>
<feature type="binding site" evidence="1">
    <location>
        <begin position="479"/>
        <end position="481"/>
    </location>
    <ligand>
        <name>ATP</name>
        <dbReference type="ChEBI" id="CHEBI:30616"/>
    </ligand>
</feature>
<feature type="binding site" evidence="1">
    <location>
        <position position="495"/>
    </location>
    <ligand>
        <name>ATP</name>
        <dbReference type="ChEBI" id="CHEBI:30616"/>
    </ligand>
</feature>
<proteinExistence type="inferred from homology"/>
<name>CH60_PSEAB</name>
<dbReference type="EC" id="5.6.1.7" evidence="1"/>
<dbReference type="EMBL" id="CP000438">
    <property type="protein sequence ID" value="ABJ13656.1"/>
    <property type="molecule type" value="Genomic_DNA"/>
</dbReference>
<dbReference type="RefSeq" id="WP_003094059.1">
    <property type="nucleotide sequence ID" value="NZ_CP034244.1"/>
</dbReference>
<dbReference type="SMR" id="Q02H55"/>
<dbReference type="KEGG" id="pau:PA14_57010"/>
<dbReference type="PseudoCAP" id="PA14_57010"/>
<dbReference type="HOGENOM" id="CLU_016503_3_0_6"/>
<dbReference type="BioCyc" id="PAER208963:G1G74-4801-MONOMER"/>
<dbReference type="Proteomes" id="UP000000653">
    <property type="component" value="Chromosome"/>
</dbReference>
<dbReference type="GO" id="GO:0005737">
    <property type="term" value="C:cytoplasm"/>
    <property type="evidence" value="ECO:0007669"/>
    <property type="project" value="UniProtKB-SubCell"/>
</dbReference>
<dbReference type="GO" id="GO:0005524">
    <property type="term" value="F:ATP binding"/>
    <property type="evidence" value="ECO:0007669"/>
    <property type="project" value="UniProtKB-UniRule"/>
</dbReference>
<dbReference type="GO" id="GO:0140662">
    <property type="term" value="F:ATP-dependent protein folding chaperone"/>
    <property type="evidence" value="ECO:0007669"/>
    <property type="project" value="InterPro"/>
</dbReference>
<dbReference type="GO" id="GO:0016853">
    <property type="term" value="F:isomerase activity"/>
    <property type="evidence" value="ECO:0007669"/>
    <property type="project" value="UniProtKB-KW"/>
</dbReference>
<dbReference type="GO" id="GO:0051082">
    <property type="term" value="F:unfolded protein binding"/>
    <property type="evidence" value="ECO:0007669"/>
    <property type="project" value="UniProtKB-UniRule"/>
</dbReference>
<dbReference type="GO" id="GO:0042026">
    <property type="term" value="P:protein refolding"/>
    <property type="evidence" value="ECO:0007669"/>
    <property type="project" value="UniProtKB-UniRule"/>
</dbReference>
<dbReference type="CDD" id="cd03344">
    <property type="entry name" value="GroEL"/>
    <property type="match status" value="1"/>
</dbReference>
<dbReference type="FunFam" id="1.10.560.10:FF:000001">
    <property type="entry name" value="60 kDa chaperonin"/>
    <property type="match status" value="1"/>
</dbReference>
<dbReference type="FunFam" id="3.50.7.10:FF:000001">
    <property type="entry name" value="60 kDa chaperonin"/>
    <property type="match status" value="1"/>
</dbReference>
<dbReference type="Gene3D" id="3.50.7.10">
    <property type="entry name" value="GroEL"/>
    <property type="match status" value="1"/>
</dbReference>
<dbReference type="Gene3D" id="1.10.560.10">
    <property type="entry name" value="GroEL-like equatorial domain"/>
    <property type="match status" value="1"/>
</dbReference>
<dbReference type="Gene3D" id="3.30.260.10">
    <property type="entry name" value="TCP-1-like chaperonin intermediate domain"/>
    <property type="match status" value="1"/>
</dbReference>
<dbReference type="HAMAP" id="MF_00600">
    <property type="entry name" value="CH60"/>
    <property type="match status" value="1"/>
</dbReference>
<dbReference type="InterPro" id="IPR018370">
    <property type="entry name" value="Chaperonin_Cpn60_CS"/>
</dbReference>
<dbReference type="InterPro" id="IPR001844">
    <property type="entry name" value="Cpn60/GroEL"/>
</dbReference>
<dbReference type="InterPro" id="IPR002423">
    <property type="entry name" value="Cpn60/GroEL/TCP-1"/>
</dbReference>
<dbReference type="InterPro" id="IPR027409">
    <property type="entry name" value="GroEL-like_apical_dom_sf"/>
</dbReference>
<dbReference type="InterPro" id="IPR027413">
    <property type="entry name" value="GROEL-like_equatorial_sf"/>
</dbReference>
<dbReference type="InterPro" id="IPR027410">
    <property type="entry name" value="TCP-1-like_intermed_sf"/>
</dbReference>
<dbReference type="NCBIfam" id="TIGR02348">
    <property type="entry name" value="GroEL"/>
    <property type="match status" value="1"/>
</dbReference>
<dbReference type="NCBIfam" id="NF000592">
    <property type="entry name" value="PRK00013.1"/>
    <property type="match status" value="1"/>
</dbReference>
<dbReference type="NCBIfam" id="NF009487">
    <property type="entry name" value="PRK12849.1"/>
    <property type="match status" value="1"/>
</dbReference>
<dbReference type="NCBIfam" id="NF009488">
    <property type="entry name" value="PRK12850.1"/>
    <property type="match status" value="1"/>
</dbReference>
<dbReference type="NCBIfam" id="NF009489">
    <property type="entry name" value="PRK12851.1"/>
    <property type="match status" value="1"/>
</dbReference>
<dbReference type="PANTHER" id="PTHR45633">
    <property type="entry name" value="60 KDA HEAT SHOCK PROTEIN, MITOCHONDRIAL"/>
    <property type="match status" value="1"/>
</dbReference>
<dbReference type="Pfam" id="PF00118">
    <property type="entry name" value="Cpn60_TCP1"/>
    <property type="match status" value="1"/>
</dbReference>
<dbReference type="PRINTS" id="PR00298">
    <property type="entry name" value="CHAPERONIN60"/>
</dbReference>
<dbReference type="SUPFAM" id="SSF52029">
    <property type="entry name" value="GroEL apical domain-like"/>
    <property type="match status" value="1"/>
</dbReference>
<dbReference type="SUPFAM" id="SSF48592">
    <property type="entry name" value="GroEL equatorial domain-like"/>
    <property type="match status" value="1"/>
</dbReference>
<dbReference type="SUPFAM" id="SSF54849">
    <property type="entry name" value="GroEL-intermediate domain like"/>
    <property type="match status" value="1"/>
</dbReference>
<dbReference type="PROSITE" id="PS00296">
    <property type="entry name" value="CHAPERONINS_CPN60"/>
    <property type="match status" value="1"/>
</dbReference>
<comment type="function">
    <text evidence="1">Together with its co-chaperonin GroES, plays an essential role in assisting protein folding. The GroEL-GroES system forms a nano-cage that allows encapsulation of the non-native substrate proteins and provides a physical environment optimized to promote and accelerate protein folding.</text>
</comment>
<comment type="catalytic activity">
    <reaction evidence="1">
        <text>ATP + H2O + a folded polypeptide = ADP + phosphate + an unfolded polypeptide.</text>
        <dbReference type="EC" id="5.6.1.7"/>
    </reaction>
</comment>
<comment type="subunit">
    <text evidence="1">Forms a cylinder of 14 subunits composed of two heptameric rings stacked back-to-back. Interacts with the co-chaperonin GroES.</text>
</comment>
<comment type="subcellular location">
    <subcellularLocation>
        <location evidence="1">Cytoplasm</location>
    </subcellularLocation>
</comment>
<comment type="similarity">
    <text evidence="1">Belongs to the chaperonin (HSP60) family.</text>
</comment>